<evidence type="ECO:0000255" key="1">
    <source>
        <dbReference type="HAMAP-Rule" id="MF_00110"/>
    </source>
</evidence>
<sequence>MGNIHIQTKSKEYDVYVGKESLSHLTTIVQNMQPSVSNIMIISDEAVASLHLQTVVDALQIDQKVFSFVVPSGEKEKSFENFYAAHTSALENKLDRNSLIVALGGGMIGDLAGFVAASFMRGIRFVQVPTTLLAHDSAVGGKVAINHPLGKNMIGAFHQPEAVVYHTPFLQSLPEKEWRSGYAEVIKHALIGDVKLYHWLKEEVQTLADLRDEKLIHILTKAIPVKANIVAQDETEKGVRAHLNFGHTLGHALEKELGYGNITHGDGVAVGMLFAIFLSEQVYKVNLAYEEMKQWFLKYGYPKMPSDLSVERLVGLMKQDKKANAGTIHMVLMQEYGVVNVVSIPDETVHIALEAFQKDMVEK</sequence>
<gene>
    <name evidence="1" type="primary">aroB</name>
    <name type="ordered locus">BCA_1576</name>
</gene>
<name>AROB_BACC3</name>
<organism>
    <name type="scientific">Bacillus cereus (strain 03BB102)</name>
    <dbReference type="NCBI Taxonomy" id="572264"/>
    <lineage>
        <taxon>Bacteria</taxon>
        <taxon>Bacillati</taxon>
        <taxon>Bacillota</taxon>
        <taxon>Bacilli</taxon>
        <taxon>Bacillales</taxon>
        <taxon>Bacillaceae</taxon>
        <taxon>Bacillus</taxon>
        <taxon>Bacillus cereus group</taxon>
    </lineage>
</organism>
<protein>
    <recommendedName>
        <fullName evidence="1">3-dehydroquinate synthase</fullName>
        <shortName evidence="1">DHQS</shortName>
        <ecNumber evidence="1">4.2.3.4</ecNumber>
    </recommendedName>
</protein>
<accession>C1EN14</accession>
<proteinExistence type="inferred from homology"/>
<comment type="function">
    <text evidence="1">Catalyzes the conversion of 3-deoxy-D-arabino-heptulosonate 7-phosphate (DAHP) to dehydroquinate (DHQ).</text>
</comment>
<comment type="catalytic activity">
    <reaction evidence="1">
        <text>7-phospho-2-dehydro-3-deoxy-D-arabino-heptonate = 3-dehydroquinate + phosphate</text>
        <dbReference type="Rhea" id="RHEA:21968"/>
        <dbReference type="ChEBI" id="CHEBI:32364"/>
        <dbReference type="ChEBI" id="CHEBI:43474"/>
        <dbReference type="ChEBI" id="CHEBI:58394"/>
        <dbReference type="EC" id="4.2.3.4"/>
    </reaction>
</comment>
<comment type="cofactor">
    <cofactor evidence="1">
        <name>Co(2+)</name>
        <dbReference type="ChEBI" id="CHEBI:48828"/>
    </cofactor>
    <cofactor evidence="1">
        <name>Zn(2+)</name>
        <dbReference type="ChEBI" id="CHEBI:29105"/>
    </cofactor>
    <text evidence="1">Binds 1 divalent metal cation per subunit. Can use either Co(2+) or Zn(2+).</text>
</comment>
<comment type="cofactor">
    <cofactor evidence="1">
        <name>NAD(+)</name>
        <dbReference type="ChEBI" id="CHEBI:57540"/>
    </cofactor>
</comment>
<comment type="pathway">
    <text evidence="1">Metabolic intermediate biosynthesis; chorismate biosynthesis; chorismate from D-erythrose 4-phosphate and phosphoenolpyruvate: step 2/7.</text>
</comment>
<comment type="subcellular location">
    <subcellularLocation>
        <location evidence="1">Cytoplasm</location>
    </subcellularLocation>
</comment>
<comment type="similarity">
    <text evidence="1">Belongs to the sugar phosphate cyclases superfamily. Dehydroquinate synthase family.</text>
</comment>
<reference key="1">
    <citation type="submission" date="2009-02" db="EMBL/GenBank/DDBJ databases">
        <title>Genome sequence of Bacillus cereus 03BB102.</title>
        <authorList>
            <person name="Dodson R.J."/>
            <person name="Jackson P."/>
            <person name="Munk A.C."/>
            <person name="Brettin T."/>
            <person name="Bruce D."/>
            <person name="Detter C."/>
            <person name="Tapia R."/>
            <person name="Han C."/>
            <person name="Sutton G."/>
            <person name="Sims D."/>
        </authorList>
    </citation>
    <scope>NUCLEOTIDE SEQUENCE [LARGE SCALE GENOMIC DNA]</scope>
    <source>
        <strain>03BB102</strain>
    </source>
</reference>
<feature type="chain" id="PRO_1000119073" description="3-dehydroquinate synthase">
    <location>
        <begin position="1"/>
        <end position="363"/>
    </location>
</feature>
<feature type="binding site" evidence="1">
    <location>
        <begin position="72"/>
        <end position="77"/>
    </location>
    <ligand>
        <name>NAD(+)</name>
        <dbReference type="ChEBI" id="CHEBI:57540"/>
    </ligand>
</feature>
<feature type="binding site" evidence="1">
    <location>
        <begin position="130"/>
        <end position="131"/>
    </location>
    <ligand>
        <name>NAD(+)</name>
        <dbReference type="ChEBI" id="CHEBI:57540"/>
    </ligand>
</feature>
<feature type="binding site" evidence="1">
    <location>
        <position position="142"/>
    </location>
    <ligand>
        <name>NAD(+)</name>
        <dbReference type="ChEBI" id="CHEBI:57540"/>
    </ligand>
</feature>
<feature type="binding site" evidence="1">
    <location>
        <position position="151"/>
    </location>
    <ligand>
        <name>NAD(+)</name>
        <dbReference type="ChEBI" id="CHEBI:57540"/>
    </ligand>
</feature>
<feature type="binding site" evidence="1">
    <location>
        <position position="184"/>
    </location>
    <ligand>
        <name>Zn(2+)</name>
        <dbReference type="ChEBI" id="CHEBI:29105"/>
    </ligand>
</feature>
<feature type="binding site" evidence="1">
    <location>
        <position position="247"/>
    </location>
    <ligand>
        <name>Zn(2+)</name>
        <dbReference type="ChEBI" id="CHEBI:29105"/>
    </ligand>
</feature>
<feature type="binding site" evidence="1">
    <location>
        <position position="264"/>
    </location>
    <ligand>
        <name>Zn(2+)</name>
        <dbReference type="ChEBI" id="CHEBI:29105"/>
    </ligand>
</feature>
<keyword id="KW-0028">Amino-acid biosynthesis</keyword>
<keyword id="KW-0057">Aromatic amino acid biosynthesis</keyword>
<keyword id="KW-0170">Cobalt</keyword>
<keyword id="KW-0963">Cytoplasm</keyword>
<keyword id="KW-0456">Lyase</keyword>
<keyword id="KW-0479">Metal-binding</keyword>
<keyword id="KW-0520">NAD</keyword>
<keyword id="KW-0547">Nucleotide-binding</keyword>
<keyword id="KW-0862">Zinc</keyword>
<dbReference type="EC" id="4.2.3.4" evidence="1"/>
<dbReference type="EMBL" id="CP001407">
    <property type="protein sequence ID" value="ACO28868.1"/>
    <property type="molecule type" value="Genomic_DNA"/>
</dbReference>
<dbReference type="RefSeq" id="WP_000526833.1">
    <property type="nucleotide sequence ID" value="NZ_CP009318.1"/>
</dbReference>
<dbReference type="SMR" id="C1EN14"/>
<dbReference type="KEGG" id="bcx:BCA_1576"/>
<dbReference type="PATRIC" id="fig|572264.18.peg.1524"/>
<dbReference type="UniPathway" id="UPA00053">
    <property type="reaction ID" value="UER00085"/>
</dbReference>
<dbReference type="Proteomes" id="UP000002210">
    <property type="component" value="Chromosome"/>
</dbReference>
<dbReference type="GO" id="GO:0005737">
    <property type="term" value="C:cytoplasm"/>
    <property type="evidence" value="ECO:0007669"/>
    <property type="project" value="UniProtKB-SubCell"/>
</dbReference>
<dbReference type="GO" id="GO:0003856">
    <property type="term" value="F:3-dehydroquinate synthase activity"/>
    <property type="evidence" value="ECO:0007669"/>
    <property type="project" value="UniProtKB-UniRule"/>
</dbReference>
<dbReference type="GO" id="GO:0046872">
    <property type="term" value="F:metal ion binding"/>
    <property type="evidence" value="ECO:0007669"/>
    <property type="project" value="UniProtKB-KW"/>
</dbReference>
<dbReference type="GO" id="GO:0000166">
    <property type="term" value="F:nucleotide binding"/>
    <property type="evidence" value="ECO:0007669"/>
    <property type="project" value="UniProtKB-KW"/>
</dbReference>
<dbReference type="GO" id="GO:0008652">
    <property type="term" value="P:amino acid biosynthetic process"/>
    <property type="evidence" value="ECO:0007669"/>
    <property type="project" value="UniProtKB-KW"/>
</dbReference>
<dbReference type="GO" id="GO:0009073">
    <property type="term" value="P:aromatic amino acid family biosynthetic process"/>
    <property type="evidence" value="ECO:0007669"/>
    <property type="project" value="UniProtKB-KW"/>
</dbReference>
<dbReference type="GO" id="GO:0009423">
    <property type="term" value="P:chorismate biosynthetic process"/>
    <property type="evidence" value="ECO:0007669"/>
    <property type="project" value="UniProtKB-UniRule"/>
</dbReference>
<dbReference type="CDD" id="cd08195">
    <property type="entry name" value="DHQS"/>
    <property type="match status" value="1"/>
</dbReference>
<dbReference type="FunFam" id="1.20.1090.10:FF:000008">
    <property type="entry name" value="3-dehydroquinate synthase"/>
    <property type="match status" value="1"/>
</dbReference>
<dbReference type="FunFam" id="3.40.50.1970:FF:000001">
    <property type="entry name" value="3-dehydroquinate synthase"/>
    <property type="match status" value="1"/>
</dbReference>
<dbReference type="Gene3D" id="3.40.50.1970">
    <property type="match status" value="1"/>
</dbReference>
<dbReference type="Gene3D" id="1.20.1090.10">
    <property type="entry name" value="Dehydroquinate synthase-like - alpha domain"/>
    <property type="match status" value="1"/>
</dbReference>
<dbReference type="HAMAP" id="MF_00110">
    <property type="entry name" value="DHQ_synthase"/>
    <property type="match status" value="1"/>
</dbReference>
<dbReference type="InterPro" id="IPR050071">
    <property type="entry name" value="Dehydroquinate_synthase"/>
</dbReference>
<dbReference type="InterPro" id="IPR016037">
    <property type="entry name" value="DHQ_synth_AroB"/>
</dbReference>
<dbReference type="InterPro" id="IPR030963">
    <property type="entry name" value="DHQ_synth_fam"/>
</dbReference>
<dbReference type="InterPro" id="IPR030960">
    <property type="entry name" value="DHQS/DOIS_N"/>
</dbReference>
<dbReference type="InterPro" id="IPR056179">
    <property type="entry name" value="DHQS_C"/>
</dbReference>
<dbReference type="NCBIfam" id="TIGR01357">
    <property type="entry name" value="aroB"/>
    <property type="match status" value="1"/>
</dbReference>
<dbReference type="PANTHER" id="PTHR43622">
    <property type="entry name" value="3-DEHYDROQUINATE SYNTHASE"/>
    <property type="match status" value="1"/>
</dbReference>
<dbReference type="PANTHER" id="PTHR43622:SF7">
    <property type="entry name" value="3-DEHYDROQUINATE SYNTHASE, CHLOROPLASTIC"/>
    <property type="match status" value="1"/>
</dbReference>
<dbReference type="Pfam" id="PF01761">
    <property type="entry name" value="DHQ_synthase"/>
    <property type="match status" value="1"/>
</dbReference>
<dbReference type="Pfam" id="PF24621">
    <property type="entry name" value="DHQS_C"/>
    <property type="match status" value="1"/>
</dbReference>
<dbReference type="PIRSF" id="PIRSF001455">
    <property type="entry name" value="DHQ_synth"/>
    <property type="match status" value="1"/>
</dbReference>
<dbReference type="SUPFAM" id="SSF56796">
    <property type="entry name" value="Dehydroquinate synthase-like"/>
    <property type="match status" value="1"/>
</dbReference>